<proteinExistence type="inferred from homology"/>
<feature type="chain" id="PRO_0000134629" description="Orotidine 5'-phosphate decarboxylase">
    <location>
        <begin position="1"/>
        <end position="276"/>
    </location>
</feature>
<feature type="active site" description="Proton donor" evidence="1">
    <location>
        <position position="95"/>
    </location>
</feature>
<name>PYRF_MYCS2</name>
<keyword id="KW-0210">Decarboxylase</keyword>
<keyword id="KW-0456">Lyase</keyword>
<keyword id="KW-0665">Pyrimidine biosynthesis</keyword>
<keyword id="KW-1185">Reference proteome</keyword>
<protein>
    <recommendedName>
        <fullName>Orotidine 5'-phosphate decarboxylase</fullName>
        <ecNumber>4.1.1.23</ecNumber>
    </recommendedName>
    <alternativeName>
        <fullName>OMP decarboxylase</fullName>
        <shortName>OMPDCase</shortName>
        <shortName>OMPdecase</shortName>
    </alternativeName>
</protein>
<sequence>MTGFGQRLDAAVSARGPLCPGIDPHPELLNAWGLTVDAEGLRAFCDICVAAFAGFAIVKPQVAFFEAYGSAGFAVLEDTIAALRAEGVLVLADAKRGDIGSTMAAYAAAWAGDSPLAADAVTASPYLGFGSLRPLLDTAVANGRGVFVLAATSNPEGVGLQRAVAGDVTVAQSIVDAVAQANREADPAARDGDPVGPFGVVVGATVADPPDLHMLGGPVLVPGVGAQGGRPEALGGLGNARRLLPAVSREVLRAGPAVDDVRAAAERLRDQVAYLA</sequence>
<gene>
    <name type="primary">pyrF</name>
    <name type="ordered locus">MSMEG_3048</name>
    <name type="ordered locus">MSMEI_2974</name>
</gene>
<evidence type="ECO:0000250" key="1"/>
<evidence type="ECO:0000305" key="2"/>
<organism>
    <name type="scientific">Mycolicibacterium smegmatis (strain ATCC 700084 / mc(2)155)</name>
    <name type="common">Mycobacterium smegmatis</name>
    <dbReference type="NCBI Taxonomy" id="246196"/>
    <lineage>
        <taxon>Bacteria</taxon>
        <taxon>Bacillati</taxon>
        <taxon>Actinomycetota</taxon>
        <taxon>Actinomycetes</taxon>
        <taxon>Mycobacteriales</taxon>
        <taxon>Mycobacteriaceae</taxon>
        <taxon>Mycolicibacterium</taxon>
    </lineage>
</organism>
<comment type="catalytic activity">
    <reaction>
        <text>orotidine 5'-phosphate + H(+) = UMP + CO2</text>
        <dbReference type="Rhea" id="RHEA:11596"/>
        <dbReference type="ChEBI" id="CHEBI:15378"/>
        <dbReference type="ChEBI" id="CHEBI:16526"/>
        <dbReference type="ChEBI" id="CHEBI:57538"/>
        <dbReference type="ChEBI" id="CHEBI:57865"/>
        <dbReference type="EC" id="4.1.1.23"/>
    </reaction>
</comment>
<comment type="pathway">
    <text>Pyrimidine metabolism; UMP biosynthesis via de novo pathway; UMP from orotate: step 2/2.</text>
</comment>
<comment type="similarity">
    <text evidence="2">Belongs to the OMP decarboxylase family. Type 2 subfamily.</text>
</comment>
<dbReference type="EC" id="4.1.1.23"/>
<dbReference type="EMBL" id="U91572">
    <property type="protein sequence ID" value="AAB50157.1"/>
    <property type="molecule type" value="Genomic_DNA"/>
</dbReference>
<dbReference type="EMBL" id="CP000480">
    <property type="protein sequence ID" value="ABK73017.1"/>
    <property type="molecule type" value="Genomic_DNA"/>
</dbReference>
<dbReference type="EMBL" id="CP001663">
    <property type="protein sequence ID" value="AFP39438.1"/>
    <property type="molecule type" value="Genomic_DNA"/>
</dbReference>
<dbReference type="RefSeq" id="WP_003894432.1">
    <property type="nucleotide sequence ID" value="NZ_SIJM01000002.1"/>
</dbReference>
<dbReference type="RefSeq" id="YP_887364.1">
    <property type="nucleotide sequence ID" value="NC_008596.1"/>
</dbReference>
<dbReference type="SMR" id="O08323"/>
<dbReference type="STRING" id="246196.MSMEG_3048"/>
<dbReference type="PaxDb" id="246196-MSMEI_2974"/>
<dbReference type="GeneID" id="93457827"/>
<dbReference type="KEGG" id="msb:LJ00_15170"/>
<dbReference type="KEGG" id="msg:MSMEI_2974"/>
<dbReference type="KEGG" id="msm:MSMEG_3048"/>
<dbReference type="PATRIC" id="fig|246196.19.peg.3010"/>
<dbReference type="eggNOG" id="COG0284">
    <property type="taxonomic scope" value="Bacteria"/>
</dbReference>
<dbReference type="OrthoDB" id="9808470at2"/>
<dbReference type="UniPathway" id="UPA00070">
    <property type="reaction ID" value="UER00120"/>
</dbReference>
<dbReference type="Proteomes" id="UP000000757">
    <property type="component" value="Chromosome"/>
</dbReference>
<dbReference type="Proteomes" id="UP000006158">
    <property type="component" value="Chromosome"/>
</dbReference>
<dbReference type="GO" id="GO:0004590">
    <property type="term" value="F:orotidine-5'-phosphate decarboxylase activity"/>
    <property type="evidence" value="ECO:0007669"/>
    <property type="project" value="UniProtKB-UniRule"/>
</dbReference>
<dbReference type="GO" id="GO:0006207">
    <property type="term" value="P:'de novo' pyrimidine nucleobase biosynthetic process"/>
    <property type="evidence" value="ECO:0007669"/>
    <property type="project" value="InterPro"/>
</dbReference>
<dbReference type="GO" id="GO:0044205">
    <property type="term" value="P:'de novo' UMP biosynthetic process"/>
    <property type="evidence" value="ECO:0007669"/>
    <property type="project" value="UniProtKB-UniRule"/>
</dbReference>
<dbReference type="CDD" id="cd04725">
    <property type="entry name" value="OMP_decarboxylase_like"/>
    <property type="match status" value="1"/>
</dbReference>
<dbReference type="Gene3D" id="3.20.20.70">
    <property type="entry name" value="Aldolase class I"/>
    <property type="match status" value="1"/>
</dbReference>
<dbReference type="HAMAP" id="MF_01215">
    <property type="entry name" value="OMPdecase_type2"/>
    <property type="match status" value="1"/>
</dbReference>
<dbReference type="InterPro" id="IPR013785">
    <property type="entry name" value="Aldolase_TIM"/>
</dbReference>
<dbReference type="InterPro" id="IPR018089">
    <property type="entry name" value="OMPdecase_AS"/>
</dbReference>
<dbReference type="InterPro" id="IPR011995">
    <property type="entry name" value="OMPdecase_type-2"/>
</dbReference>
<dbReference type="InterPro" id="IPR001754">
    <property type="entry name" value="OMPdeCOase_dom"/>
</dbReference>
<dbReference type="InterPro" id="IPR011060">
    <property type="entry name" value="RibuloseP-bd_barrel"/>
</dbReference>
<dbReference type="NCBIfam" id="TIGR02127">
    <property type="entry name" value="pyrF_sub2"/>
    <property type="match status" value="1"/>
</dbReference>
<dbReference type="PANTHER" id="PTHR43375">
    <property type="entry name" value="OROTIDINE 5'-PHOSPHATE DECARBOXYLASE"/>
    <property type="match status" value="1"/>
</dbReference>
<dbReference type="PANTHER" id="PTHR43375:SF1">
    <property type="entry name" value="OROTIDINE 5'-PHOSPHATE DECARBOXYLASE"/>
    <property type="match status" value="1"/>
</dbReference>
<dbReference type="Pfam" id="PF00215">
    <property type="entry name" value="OMPdecase"/>
    <property type="match status" value="1"/>
</dbReference>
<dbReference type="SMART" id="SM00934">
    <property type="entry name" value="OMPdecase"/>
    <property type="match status" value="1"/>
</dbReference>
<dbReference type="SUPFAM" id="SSF51366">
    <property type="entry name" value="Ribulose-phoshate binding barrel"/>
    <property type="match status" value="1"/>
</dbReference>
<dbReference type="PROSITE" id="PS00156">
    <property type="entry name" value="OMPDECASE"/>
    <property type="match status" value="1"/>
</dbReference>
<reference key="1">
    <citation type="journal article" date="1997" name="Plasmid">
        <title>Unmarked gene integration into the chromosome of Mycobacterium smegmatis via precise replacement of the pyrF gene.</title>
        <authorList>
            <person name="Knipfer N."/>
            <person name="Seth A."/>
            <person name="Shrader T.E."/>
        </authorList>
    </citation>
    <scope>NUCLEOTIDE SEQUENCE [GENOMIC DNA]</scope>
</reference>
<reference key="2">
    <citation type="submission" date="2006-10" db="EMBL/GenBank/DDBJ databases">
        <authorList>
            <person name="Fleischmann R.D."/>
            <person name="Dodson R.J."/>
            <person name="Haft D.H."/>
            <person name="Merkel J.S."/>
            <person name="Nelson W.C."/>
            <person name="Fraser C.M."/>
        </authorList>
    </citation>
    <scope>NUCLEOTIDE SEQUENCE [LARGE SCALE GENOMIC DNA]</scope>
    <source>
        <strain>ATCC 700084 / mc(2)155</strain>
    </source>
</reference>
<reference key="3">
    <citation type="journal article" date="2007" name="Genome Biol.">
        <title>Interrupted coding sequences in Mycobacterium smegmatis: authentic mutations or sequencing errors?</title>
        <authorList>
            <person name="Deshayes C."/>
            <person name="Perrodou E."/>
            <person name="Gallien S."/>
            <person name="Euphrasie D."/>
            <person name="Schaeffer C."/>
            <person name="Van-Dorsselaer A."/>
            <person name="Poch O."/>
            <person name="Lecompte O."/>
            <person name="Reyrat J.-M."/>
        </authorList>
    </citation>
    <scope>NUCLEOTIDE SEQUENCE [LARGE SCALE GENOMIC DNA]</scope>
    <source>
        <strain>ATCC 700084 / mc(2)155</strain>
    </source>
</reference>
<reference key="4">
    <citation type="journal article" date="2009" name="Genome Res.">
        <title>Ortho-proteogenomics: multiple proteomes investigation through orthology and a new MS-based protocol.</title>
        <authorList>
            <person name="Gallien S."/>
            <person name="Perrodou E."/>
            <person name="Carapito C."/>
            <person name="Deshayes C."/>
            <person name="Reyrat J.-M."/>
            <person name="Van Dorsselaer A."/>
            <person name="Poch O."/>
            <person name="Schaeffer C."/>
            <person name="Lecompte O."/>
        </authorList>
    </citation>
    <scope>NUCLEOTIDE SEQUENCE [LARGE SCALE GENOMIC DNA]</scope>
    <source>
        <strain>ATCC 700084 / mc(2)155</strain>
    </source>
</reference>
<accession>O08323</accession>
<accession>A0QWS6</accession>
<accession>I7FL41</accession>